<dbReference type="EC" id="4.1.1.50"/>
<dbReference type="EMBL" id="AF334029">
    <property type="protein sequence ID" value="AAG61146.1"/>
    <property type="molecule type" value="mRNA"/>
</dbReference>
<dbReference type="SMR" id="Q9AXE3"/>
<dbReference type="UniPathway" id="UPA00331">
    <property type="reaction ID" value="UER00451"/>
</dbReference>
<dbReference type="GO" id="GO:0005829">
    <property type="term" value="C:cytosol"/>
    <property type="evidence" value="ECO:0007669"/>
    <property type="project" value="TreeGrafter"/>
</dbReference>
<dbReference type="GO" id="GO:0004014">
    <property type="term" value="F:adenosylmethionine decarboxylase activity"/>
    <property type="evidence" value="ECO:0007669"/>
    <property type="project" value="UniProtKB-EC"/>
</dbReference>
<dbReference type="GO" id="GO:0008295">
    <property type="term" value="P:spermidine biosynthetic process"/>
    <property type="evidence" value="ECO:0007669"/>
    <property type="project" value="UniProtKB-KW"/>
</dbReference>
<dbReference type="GO" id="GO:0006597">
    <property type="term" value="P:spermine biosynthetic process"/>
    <property type="evidence" value="ECO:0007669"/>
    <property type="project" value="InterPro"/>
</dbReference>
<dbReference type="FunFam" id="3.30.360.50:FF:000001">
    <property type="entry name" value="S-adenosylmethionine decarboxylase proenzyme"/>
    <property type="match status" value="1"/>
</dbReference>
<dbReference type="FunFam" id="3.60.90.10:FF:000002">
    <property type="entry name" value="S-adenosylmethionine decarboxylase proenzyme"/>
    <property type="match status" value="1"/>
</dbReference>
<dbReference type="Gene3D" id="3.30.360.50">
    <property type="entry name" value="S-adenosylmethionine decarboxylase"/>
    <property type="match status" value="1"/>
</dbReference>
<dbReference type="Gene3D" id="3.60.90.10">
    <property type="entry name" value="S-adenosylmethionine decarboxylase"/>
    <property type="match status" value="1"/>
</dbReference>
<dbReference type="InterPro" id="IPR048283">
    <property type="entry name" value="AdoMetDC-like"/>
</dbReference>
<dbReference type="InterPro" id="IPR001985">
    <property type="entry name" value="S-AdoMet_decarboxylase_euk"/>
</dbReference>
<dbReference type="InterPro" id="IPR016067">
    <property type="entry name" value="S-AdoMet_deCO2ase_core"/>
</dbReference>
<dbReference type="InterPro" id="IPR018166">
    <property type="entry name" value="S-AdoMet_deCO2ase_CS"/>
</dbReference>
<dbReference type="NCBIfam" id="TIGR00535">
    <property type="entry name" value="SAM_DCase"/>
    <property type="match status" value="1"/>
</dbReference>
<dbReference type="PANTHER" id="PTHR11570:SF33">
    <property type="entry name" value="ADENOSYLMETHIONINE DECARBOXYLASE"/>
    <property type="match status" value="1"/>
</dbReference>
<dbReference type="PANTHER" id="PTHR11570">
    <property type="entry name" value="S-ADENOSYLMETHIONINE DECARBOXYLASE"/>
    <property type="match status" value="1"/>
</dbReference>
<dbReference type="Pfam" id="PF01536">
    <property type="entry name" value="SAM_decarbox"/>
    <property type="match status" value="1"/>
</dbReference>
<dbReference type="PIRSF" id="PIRSF001355">
    <property type="entry name" value="S-AdenosylMet_decarboxylase"/>
    <property type="match status" value="1"/>
</dbReference>
<dbReference type="SUPFAM" id="SSF56276">
    <property type="entry name" value="S-adenosylmethionine decarboxylase"/>
    <property type="match status" value="1"/>
</dbReference>
<dbReference type="PROSITE" id="PS01336">
    <property type="entry name" value="ADOMETDC"/>
    <property type="match status" value="1"/>
</dbReference>
<name>DCAM_DAUCA</name>
<comment type="catalytic activity">
    <reaction>
        <text>S-adenosyl-L-methionine + H(+) = S-adenosyl 3-(methylsulfanyl)propylamine + CO2</text>
        <dbReference type="Rhea" id="RHEA:15981"/>
        <dbReference type="ChEBI" id="CHEBI:15378"/>
        <dbReference type="ChEBI" id="CHEBI:16526"/>
        <dbReference type="ChEBI" id="CHEBI:57443"/>
        <dbReference type="ChEBI" id="CHEBI:59789"/>
        <dbReference type="EC" id="4.1.1.50"/>
    </reaction>
</comment>
<comment type="cofactor">
    <cofactor evidence="1">
        <name>pyruvate</name>
        <dbReference type="ChEBI" id="CHEBI:15361"/>
    </cofactor>
    <text evidence="1">Binds 1 pyruvoyl group covalently per subunit.</text>
</comment>
<comment type="pathway">
    <text>Amine and polyamine biosynthesis; S-adenosylmethioninamine biosynthesis; S-adenosylmethioninamine from S-adenosyl-L-methionine: step 1/1.</text>
</comment>
<comment type="PTM">
    <text evidence="1">Is synthesized initially as an inactive proenzyme. Formation of the active enzyme involves a self-maturation process in which the active site pyruvoyl group is generated from an internal serine residue via an autocatalytic post-translational modification. Two non-identical subunits are generated from the proenzyme in this reaction, and the pyruvate is formed at the N-terminus of the alpha chain, which is derived from the carboxyl end of the proenzyme. The post-translation cleavage follows an unusual pathway, termed non-hydrolytic serinolysis, in which the side chain hydroxyl group of the serine supplies its oxygen atom to form the C-terminus of the beta chain, while the remainder of the serine residue undergoes an oxidative deamination to produce ammonia and the pyruvoyl group blocking the N-terminus of the alpha chain (By similarity).</text>
</comment>
<comment type="similarity">
    <text evidence="2">Belongs to the eukaryotic AdoMetDC family.</text>
</comment>
<reference key="1">
    <citation type="submission" date="2001-01" db="EMBL/GenBank/DDBJ databases">
        <authorList>
            <person name="Varma S."/>
            <person name="Hrabak E.M."/>
            <person name="Minocha S.C."/>
        </authorList>
    </citation>
    <scope>NUCLEOTIDE SEQUENCE [MRNA]</scope>
    <source>
        <strain>cv. Queen Anne's Lace</strain>
    </source>
</reference>
<sequence>MSSEVSAIGFEGFEKRLEISFFEPSFFADPEGKGLRVLSKNQLDEFLGPAECTIVASLSNEHVDSYVLSESSLFVYAYKIIIKTCGTTKLLKSIPPILKLADSLSLTVRSVRYTRGCFIFPGAQSYPHRSFSEEVSVLDNYFGKLGSGSKAYIMGGSDKQQKWHVYSACAASTRTLDPVYTMEMCMTSLNRDKASVFYKTNSSSATSVTDNSGLRDILPNSRICDFEFDPCGYSMNAVEGPAVSTIHITPEDGFSYSSFEAVGYDPKSVNLSDLVARVLNCFQPGEFSIALQADIASELLEKTSSVHVKGYRVEEKTCEELGMDGSIVYQKFVKTTERCESPRSVLKCCWKEEEKEEKEYQ</sequence>
<evidence type="ECO:0000250" key="1"/>
<evidence type="ECO:0000305" key="2"/>
<keyword id="KW-0068">Autocatalytic cleavage</keyword>
<keyword id="KW-0210">Decarboxylase</keyword>
<keyword id="KW-0456">Lyase</keyword>
<keyword id="KW-0620">Polyamine biosynthesis</keyword>
<keyword id="KW-0670">Pyruvate</keyword>
<keyword id="KW-0949">S-adenosyl-L-methionine</keyword>
<keyword id="KW-0704">Schiff base</keyword>
<keyword id="KW-0745">Spermidine biosynthesis</keyword>
<keyword id="KW-0865">Zymogen</keyword>
<accession>Q9AXE3</accession>
<proteinExistence type="evidence at transcript level"/>
<organism>
    <name type="scientific">Daucus carota</name>
    <name type="common">Wild carrot</name>
    <dbReference type="NCBI Taxonomy" id="4039"/>
    <lineage>
        <taxon>Eukaryota</taxon>
        <taxon>Viridiplantae</taxon>
        <taxon>Streptophyta</taxon>
        <taxon>Embryophyta</taxon>
        <taxon>Tracheophyta</taxon>
        <taxon>Spermatophyta</taxon>
        <taxon>Magnoliopsida</taxon>
        <taxon>eudicotyledons</taxon>
        <taxon>Gunneridae</taxon>
        <taxon>Pentapetalae</taxon>
        <taxon>asterids</taxon>
        <taxon>campanulids</taxon>
        <taxon>Apiales</taxon>
        <taxon>Apiaceae</taxon>
        <taxon>Apioideae</taxon>
        <taxon>Scandiceae</taxon>
        <taxon>Daucinae</taxon>
        <taxon>Daucus</taxon>
        <taxon>Daucus sect. Daucus</taxon>
    </lineage>
</organism>
<feature type="chain" id="PRO_0000030001" description="S-adenosylmethionine decarboxylase beta chain" evidence="1">
    <location>
        <begin position="1"/>
        <end position="70"/>
    </location>
</feature>
<feature type="chain" id="PRO_0000030002" description="S-adenosylmethionine decarboxylase alpha chain" evidence="1">
    <location>
        <begin position="71"/>
        <end position="361"/>
    </location>
</feature>
<feature type="active site" evidence="1">
    <location>
        <position position="11"/>
    </location>
</feature>
<feature type="active site" evidence="1">
    <location>
        <position position="14"/>
    </location>
</feature>
<feature type="active site" description="Schiff-base intermediate with substrate; via pyruvic acid" evidence="1">
    <location>
        <position position="71"/>
    </location>
</feature>
<feature type="active site" description="Proton donor; for catalytic activity" evidence="1">
    <location>
        <position position="85"/>
    </location>
</feature>
<feature type="active site" description="Proton acceptor; for processing activity" evidence="1">
    <location>
        <position position="234"/>
    </location>
</feature>
<feature type="active site" description="Proton acceptor; for processing activity" evidence="1">
    <location>
        <position position="247"/>
    </location>
</feature>
<feature type="site" description="Cleavage (non-hydrolytic); by autolysis" evidence="1">
    <location>
        <begin position="70"/>
        <end position="71"/>
    </location>
</feature>
<feature type="modified residue" description="Pyruvic acid (Ser); by autocatalysis" evidence="1">
    <location>
        <position position="71"/>
    </location>
</feature>
<gene>
    <name type="primary">SAMDC</name>
</gene>
<protein>
    <recommendedName>
        <fullName>S-adenosylmethionine decarboxylase proenzyme</fullName>
        <shortName>AdoMetDC</shortName>
        <shortName>SAMDC</shortName>
        <ecNumber>4.1.1.50</ecNumber>
    </recommendedName>
    <component>
        <recommendedName>
            <fullName>S-adenosylmethionine decarboxylase alpha chain</fullName>
        </recommendedName>
    </component>
    <component>
        <recommendedName>
            <fullName>S-adenosylmethionine decarboxylase beta chain</fullName>
        </recommendedName>
    </component>
</protein>